<dbReference type="EMBL" id="AB240139">
    <property type="protein sequence ID" value="BAE48062.1"/>
    <property type="molecule type" value="Genomic_DNA"/>
</dbReference>
<dbReference type="RefSeq" id="YP_398922.1">
    <property type="nucleotide sequence ID" value="NC_007602.1"/>
</dbReference>
<dbReference type="SMR" id="Q33BX3"/>
<dbReference type="GeneID" id="3776343"/>
<dbReference type="KEGG" id="nto:3776343"/>
<dbReference type="OrthoDB" id="1640at2759"/>
<dbReference type="GO" id="GO:0009535">
    <property type="term" value="C:chloroplast thylakoid membrane"/>
    <property type="evidence" value="ECO:0007669"/>
    <property type="project" value="UniProtKB-SubCell"/>
</dbReference>
<dbReference type="GO" id="GO:0005886">
    <property type="term" value="C:plasma membrane"/>
    <property type="evidence" value="ECO:0007669"/>
    <property type="project" value="TreeGrafter"/>
</dbReference>
<dbReference type="GO" id="GO:0020037">
    <property type="term" value="F:heme binding"/>
    <property type="evidence" value="ECO:0007669"/>
    <property type="project" value="InterPro"/>
</dbReference>
<dbReference type="GO" id="GO:0017004">
    <property type="term" value="P:cytochrome complex assembly"/>
    <property type="evidence" value="ECO:0007669"/>
    <property type="project" value="UniProtKB-UniRule"/>
</dbReference>
<dbReference type="HAMAP" id="MF_01391">
    <property type="entry name" value="CytC_CcsA"/>
    <property type="match status" value="1"/>
</dbReference>
<dbReference type="InterPro" id="IPR002541">
    <property type="entry name" value="Cyt_c_assembly"/>
</dbReference>
<dbReference type="InterPro" id="IPR017562">
    <property type="entry name" value="Cyt_c_biogenesis_CcsA"/>
</dbReference>
<dbReference type="InterPro" id="IPR045062">
    <property type="entry name" value="Cyt_c_biogenesis_CcsA/CcmC"/>
</dbReference>
<dbReference type="NCBIfam" id="TIGR03144">
    <property type="entry name" value="cytochr_II_ccsB"/>
    <property type="match status" value="1"/>
</dbReference>
<dbReference type="PANTHER" id="PTHR30071:SF1">
    <property type="entry name" value="CYTOCHROME B_B6 PROTEIN-RELATED"/>
    <property type="match status" value="1"/>
</dbReference>
<dbReference type="PANTHER" id="PTHR30071">
    <property type="entry name" value="HEME EXPORTER PROTEIN C"/>
    <property type="match status" value="1"/>
</dbReference>
<dbReference type="Pfam" id="PF01578">
    <property type="entry name" value="Cytochrom_C_asm"/>
    <property type="match status" value="1"/>
</dbReference>
<keyword id="KW-0150">Chloroplast</keyword>
<keyword id="KW-0201">Cytochrome c-type biogenesis</keyword>
<keyword id="KW-0472">Membrane</keyword>
<keyword id="KW-0934">Plastid</keyword>
<keyword id="KW-0793">Thylakoid</keyword>
<keyword id="KW-0812">Transmembrane</keyword>
<keyword id="KW-1133">Transmembrane helix</keyword>
<accession>Q33BX3</accession>
<reference key="1">
    <citation type="journal article" date="2006" name="Mol. Genet. Genomics">
        <title>The chloroplast genome of Nicotiana sylvestris and Nicotiana tomentosiformis: complete sequencing confirms that the Nicotiana sylvestris progenitor is the maternal genome donor of Nicotiana tabacum.</title>
        <authorList>
            <person name="Yukawa M."/>
            <person name="Tsudzuki T."/>
            <person name="Sugiura M."/>
        </authorList>
    </citation>
    <scope>NUCLEOTIDE SEQUENCE [LARGE SCALE GENOMIC DNA]</scope>
</reference>
<geneLocation type="chloroplast"/>
<organism>
    <name type="scientific">Nicotiana tomentosiformis</name>
    <name type="common">Tobacco</name>
    <dbReference type="NCBI Taxonomy" id="4098"/>
    <lineage>
        <taxon>Eukaryota</taxon>
        <taxon>Viridiplantae</taxon>
        <taxon>Streptophyta</taxon>
        <taxon>Embryophyta</taxon>
        <taxon>Tracheophyta</taxon>
        <taxon>Spermatophyta</taxon>
        <taxon>Magnoliopsida</taxon>
        <taxon>eudicotyledons</taxon>
        <taxon>Gunneridae</taxon>
        <taxon>Pentapetalae</taxon>
        <taxon>asterids</taxon>
        <taxon>lamiids</taxon>
        <taxon>Solanales</taxon>
        <taxon>Solanaceae</taxon>
        <taxon>Nicotianoideae</taxon>
        <taxon>Nicotianeae</taxon>
        <taxon>Nicotiana</taxon>
    </lineage>
</organism>
<gene>
    <name evidence="1" type="primary">ccsA</name>
</gene>
<proteinExistence type="inferred from homology"/>
<feature type="chain" id="PRO_0000353773" description="Cytochrome c biogenesis protein CcsA">
    <location>
        <begin position="1"/>
        <end position="313"/>
    </location>
</feature>
<feature type="transmembrane region" description="Helical" evidence="1">
    <location>
        <begin position="9"/>
        <end position="29"/>
    </location>
</feature>
<feature type="transmembrane region" description="Helical" evidence="1">
    <location>
        <begin position="44"/>
        <end position="64"/>
    </location>
</feature>
<feature type="transmembrane region" description="Helical" evidence="1">
    <location>
        <begin position="71"/>
        <end position="91"/>
    </location>
</feature>
<feature type="transmembrane region" description="Helical" evidence="1">
    <location>
        <begin position="101"/>
        <end position="121"/>
    </location>
</feature>
<feature type="transmembrane region" description="Helical" evidence="1">
    <location>
        <begin position="143"/>
        <end position="163"/>
    </location>
</feature>
<feature type="transmembrane region" description="Helical" evidence="1">
    <location>
        <begin position="217"/>
        <end position="237"/>
    </location>
</feature>
<feature type="transmembrane region" description="Helical" evidence="1">
    <location>
        <begin position="244"/>
        <end position="264"/>
    </location>
</feature>
<feature type="transmembrane region" description="Helical" evidence="1">
    <location>
        <begin position="278"/>
        <end position="298"/>
    </location>
</feature>
<sequence length="313" mass="35613">MIFSTLEHILTHISFSIVSIVITIHLITLLVDEIVKLYDSSEKGIIVTFFCITGLLVTRWISSGHFPLSDLYESLIFLSWSFSLIHIIPYFKKNVLILSKIIGPSAIFTQGFATSGILTEIHQSVILVPALQSEWLIMHVSMMILGYAALLCGSLLSVALLVITFRKNRQLFYKSNGFLNESFFLGENVLQNTYFFSAKNYYRSQLIQQLDYWSYRVISLGFTFLTIGILSGAVWANEAWGSYWNWDPKETWAFITWIVFAIYLHTRTNRNLRGANSAIVASIGFLIIWICYFGVNLLGIGLHSYGSFPSTFN</sequence>
<evidence type="ECO:0000255" key="1">
    <source>
        <dbReference type="HAMAP-Rule" id="MF_01391"/>
    </source>
</evidence>
<protein>
    <recommendedName>
        <fullName evidence="1">Cytochrome c biogenesis protein CcsA</fullName>
    </recommendedName>
</protein>
<comment type="function">
    <text evidence="1">Required during biogenesis of c-type cytochromes (cytochrome c6 and cytochrome f) at the step of heme attachment.</text>
</comment>
<comment type="subunit">
    <text evidence="1">May interact with Ccs1.</text>
</comment>
<comment type="subcellular location">
    <subcellularLocation>
        <location evidence="1">Plastid</location>
        <location evidence="1">Chloroplast thylakoid membrane</location>
        <topology evidence="1">Multi-pass membrane protein</topology>
    </subcellularLocation>
</comment>
<comment type="similarity">
    <text evidence="1">Belongs to the CcmF/CycK/Ccl1/NrfE/CcsA family.</text>
</comment>
<name>CCSA_NICTO</name>